<evidence type="ECO:0000255" key="1">
    <source>
        <dbReference type="HAMAP-Rule" id="MF_00362"/>
    </source>
</evidence>
<evidence type="ECO:0000305" key="2"/>
<dbReference type="EMBL" id="CT573326">
    <property type="protein sequence ID" value="CAK13427.1"/>
    <property type="molecule type" value="Genomic_DNA"/>
</dbReference>
<dbReference type="RefSeq" id="WP_003257082.1">
    <property type="nucleotide sequence ID" value="NC_008027.1"/>
</dbReference>
<dbReference type="STRING" id="384676.PSEEN0480"/>
<dbReference type="GeneID" id="97165970"/>
<dbReference type="KEGG" id="pen:PSEEN0480"/>
<dbReference type="eggNOG" id="COG0244">
    <property type="taxonomic scope" value="Bacteria"/>
</dbReference>
<dbReference type="HOGENOM" id="CLU_092227_0_2_6"/>
<dbReference type="OrthoDB" id="9808307at2"/>
<dbReference type="Proteomes" id="UP000000658">
    <property type="component" value="Chromosome"/>
</dbReference>
<dbReference type="GO" id="GO:0015934">
    <property type="term" value="C:large ribosomal subunit"/>
    <property type="evidence" value="ECO:0007669"/>
    <property type="project" value="InterPro"/>
</dbReference>
<dbReference type="GO" id="GO:0070180">
    <property type="term" value="F:large ribosomal subunit rRNA binding"/>
    <property type="evidence" value="ECO:0007669"/>
    <property type="project" value="UniProtKB-UniRule"/>
</dbReference>
<dbReference type="GO" id="GO:0003735">
    <property type="term" value="F:structural constituent of ribosome"/>
    <property type="evidence" value="ECO:0007669"/>
    <property type="project" value="InterPro"/>
</dbReference>
<dbReference type="GO" id="GO:0006412">
    <property type="term" value="P:translation"/>
    <property type="evidence" value="ECO:0007669"/>
    <property type="project" value="UniProtKB-UniRule"/>
</dbReference>
<dbReference type="CDD" id="cd05797">
    <property type="entry name" value="Ribosomal_L10"/>
    <property type="match status" value="1"/>
</dbReference>
<dbReference type="FunFam" id="3.30.70.1730:FF:000001">
    <property type="entry name" value="50S ribosomal protein L10"/>
    <property type="match status" value="1"/>
</dbReference>
<dbReference type="Gene3D" id="3.30.70.1730">
    <property type="match status" value="1"/>
</dbReference>
<dbReference type="Gene3D" id="6.10.250.2350">
    <property type="match status" value="1"/>
</dbReference>
<dbReference type="HAMAP" id="MF_00362">
    <property type="entry name" value="Ribosomal_uL10"/>
    <property type="match status" value="1"/>
</dbReference>
<dbReference type="InterPro" id="IPR001790">
    <property type="entry name" value="Ribosomal_uL10"/>
</dbReference>
<dbReference type="InterPro" id="IPR043141">
    <property type="entry name" value="Ribosomal_uL10-like_sf"/>
</dbReference>
<dbReference type="InterPro" id="IPR022973">
    <property type="entry name" value="Ribosomal_uL10_bac"/>
</dbReference>
<dbReference type="InterPro" id="IPR047865">
    <property type="entry name" value="Ribosomal_uL10_bac_type"/>
</dbReference>
<dbReference type="InterPro" id="IPR002363">
    <property type="entry name" value="Ribosomal_uL10_CS_bac"/>
</dbReference>
<dbReference type="NCBIfam" id="NF000955">
    <property type="entry name" value="PRK00099.1-1"/>
    <property type="match status" value="1"/>
</dbReference>
<dbReference type="PANTHER" id="PTHR11560">
    <property type="entry name" value="39S RIBOSOMAL PROTEIN L10, MITOCHONDRIAL"/>
    <property type="match status" value="1"/>
</dbReference>
<dbReference type="Pfam" id="PF00466">
    <property type="entry name" value="Ribosomal_L10"/>
    <property type="match status" value="1"/>
</dbReference>
<dbReference type="SUPFAM" id="SSF160369">
    <property type="entry name" value="Ribosomal protein L10-like"/>
    <property type="match status" value="1"/>
</dbReference>
<dbReference type="PROSITE" id="PS01109">
    <property type="entry name" value="RIBOSOMAL_L10"/>
    <property type="match status" value="1"/>
</dbReference>
<name>RL10_PSEE4</name>
<accession>Q1IFX5</accession>
<keyword id="KW-0687">Ribonucleoprotein</keyword>
<keyword id="KW-0689">Ribosomal protein</keyword>
<keyword id="KW-0694">RNA-binding</keyword>
<keyword id="KW-0699">rRNA-binding</keyword>
<proteinExistence type="inferred from homology"/>
<sequence length="166" mass="17612">MAIKLEDKKAIVAEVNEAAKVALSAVVADARGVTVGAMTGLRKEAREAGVYVRVVRNTLLKRAVEGTEFSILNDAFKGPTLIAFSNEHPGAAARLFKEFAKGQDKFEIKAAAFDGKFLAANQIDVLATLPTRDEAIAQLMSVIQGATSKLARTLAALRDQKEAAAA</sequence>
<gene>
    <name evidence="1" type="primary">rplJ</name>
    <name type="ordered locus">PSEEN0480</name>
</gene>
<organism>
    <name type="scientific">Pseudomonas entomophila (strain L48)</name>
    <dbReference type="NCBI Taxonomy" id="384676"/>
    <lineage>
        <taxon>Bacteria</taxon>
        <taxon>Pseudomonadati</taxon>
        <taxon>Pseudomonadota</taxon>
        <taxon>Gammaproteobacteria</taxon>
        <taxon>Pseudomonadales</taxon>
        <taxon>Pseudomonadaceae</taxon>
        <taxon>Pseudomonas</taxon>
    </lineage>
</organism>
<reference key="1">
    <citation type="journal article" date="2006" name="Nat. Biotechnol.">
        <title>Complete genome sequence of the entomopathogenic and metabolically versatile soil bacterium Pseudomonas entomophila.</title>
        <authorList>
            <person name="Vodovar N."/>
            <person name="Vallenet D."/>
            <person name="Cruveiller S."/>
            <person name="Rouy Z."/>
            <person name="Barbe V."/>
            <person name="Acosta C."/>
            <person name="Cattolico L."/>
            <person name="Jubin C."/>
            <person name="Lajus A."/>
            <person name="Segurens B."/>
            <person name="Vacherie B."/>
            <person name="Wincker P."/>
            <person name="Weissenbach J."/>
            <person name="Lemaitre B."/>
            <person name="Medigue C."/>
            <person name="Boccard F."/>
        </authorList>
    </citation>
    <scope>NUCLEOTIDE SEQUENCE [LARGE SCALE GENOMIC DNA]</scope>
    <source>
        <strain>L48</strain>
    </source>
</reference>
<protein>
    <recommendedName>
        <fullName evidence="1">Large ribosomal subunit protein uL10</fullName>
    </recommendedName>
    <alternativeName>
        <fullName evidence="2">50S ribosomal protein L10</fullName>
    </alternativeName>
</protein>
<comment type="function">
    <text evidence="1">Forms part of the ribosomal stalk, playing a central role in the interaction of the ribosome with GTP-bound translation factors.</text>
</comment>
<comment type="subunit">
    <text evidence="1">Part of the ribosomal stalk of the 50S ribosomal subunit. The N-terminus interacts with L11 and the large rRNA to form the base of the stalk. The C-terminus forms an elongated spine to which L12 dimers bind in a sequential fashion forming a multimeric L10(L12)X complex.</text>
</comment>
<comment type="similarity">
    <text evidence="1">Belongs to the universal ribosomal protein uL10 family.</text>
</comment>
<feature type="chain" id="PRO_1000005563" description="Large ribosomal subunit protein uL10">
    <location>
        <begin position="1"/>
        <end position="166"/>
    </location>
</feature>